<accession>Q3KKK7</accession>
<dbReference type="EMBL" id="CP000051">
    <property type="protein sequence ID" value="AAX51115.1"/>
    <property type="molecule type" value="Genomic_DNA"/>
</dbReference>
<dbReference type="RefSeq" id="WP_009872964.1">
    <property type="nucleotide sequence ID" value="NC_007429.1"/>
</dbReference>
<dbReference type="SMR" id="Q3KKK7"/>
<dbReference type="KEGG" id="cta:CTA_0907"/>
<dbReference type="HOGENOM" id="CLU_087843_3_3_0"/>
<dbReference type="Proteomes" id="UP000002532">
    <property type="component" value="Chromosome"/>
</dbReference>
<dbReference type="GO" id="GO:0005829">
    <property type="term" value="C:cytosol"/>
    <property type="evidence" value="ECO:0007669"/>
    <property type="project" value="TreeGrafter"/>
</dbReference>
<dbReference type="GO" id="GO:0003723">
    <property type="term" value="F:RNA binding"/>
    <property type="evidence" value="ECO:0007669"/>
    <property type="project" value="UniProtKB-UniRule"/>
</dbReference>
<dbReference type="GO" id="GO:0006353">
    <property type="term" value="P:DNA-templated transcription termination"/>
    <property type="evidence" value="ECO:0007669"/>
    <property type="project" value="UniProtKB-UniRule"/>
</dbReference>
<dbReference type="GO" id="GO:0031564">
    <property type="term" value="P:transcription antitermination"/>
    <property type="evidence" value="ECO:0007669"/>
    <property type="project" value="UniProtKB-KW"/>
</dbReference>
<dbReference type="CDD" id="cd00619">
    <property type="entry name" value="Terminator_NusB"/>
    <property type="match status" value="1"/>
</dbReference>
<dbReference type="Gene3D" id="1.10.940.10">
    <property type="entry name" value="NusB-like"/>
    <property type="match status" value="1"/>
</dbReference>
<dbReference type="HAMAP" id="MF_00073">
    <property type="entry name" value="NusB"/>
    <property type="match status" value="1"/>
</dbReference>
<dbReference type="InterPro" id="IPR035926">
    <property type="entry name" value="NusB-like_sf"/>
</dbReference>
<dbReference type="InterPro" id="IPR011605">
    <property type="entry name" value="NusB_fam"/>
</dbReference>
<dbReference type="InterPro" id="IPR006027">
    <property type="entry name" value="NusB_RsmB_TIM44"/>
</dbReference>
<dbReference type="NCBIfam" id="TIGR01951">
    <property type="entry name" value="nusB"/>
    <property type="match status" value="1"/>
</dbReference>
<dbReference type="NCBIfam" id="NF001230">
    <property type="entry name" value="PRK00202.2-5"/>
    <property type="match status" value="1"/>
</dbReference>
<dbReference type="PANTHER" id="PTHR11078:SF3">
    <property type="entry name" value="ANTITERMINATION NUSB DOMAIN-CONTAINING PROTEIN"/>
    <property type="match status" value="1"/>
</dbReference>
<dbReference type="PANTHER" id="PTHR11078">
    <property type="entry name" value="N UTILIZATION SUBSTANCE PROTEIN B-RELATED"/>
    <property type="match status" value="1"/>
</dbReference>
<dbReference type="Pfam" id="PF01029">
    <property type="entry name" value="NusB"/>
    <property type="match status" value="1"/>
</dbReference>
<dbReference type="SUPFAM" id="SSF48013">
    <property type="entry name" value="NusB-like"/>
    <property type="match status" value="1"/>
</dbReference>
<proteinExistence type="inferred from homology"/>
<comment type="function">
    <text evidence="1">Involved in transcription antitermination. Required for transcription of ribosomal RNA (rRNA) genes. Binds specifically to the boxA antiterminator sequence of the ribosomal RNA (rrn) operons.</text>
</comment>
<comment type="similarity">
    <text evidence="1">Belongs to the NusB family.</text>
</comment>
<name>NUSB_CHLTA</name>
<feature type="chain" id="PRO_0000265502" description="Transcription antitermination protein NusB">
    <location>
        <begin position="1"/>
        <end position="168"/>
    </location>
</feature>
<sequence>MSVMASDKACAPVRASRPFPKQKLRELVLQALYALEIDPEGEDSLVSLLMTEASVSKKNAAYALMFCRAIRANQPDLDALLDATIRTTTLARLTIIERNILRMMLFEHQQNQDCCPVPVAILIAETTRLIKKFSYSEGSSLILAVLGSIFDHPAPALDAPLEPTSMCG</sequence>
<evidence type="ECO:0000255" key="1">
    <source>
        <dbReference type="HAMAP-Rule" id="MF_00073"/>
    </source>
</evidence>
<keyword id="KW-0694">RNA-binding</keyword>
<keyword id="KW-0804">Transcription</keyword>
<keyword id="KW-0889">Transcription antitermination</keyword>
<keyword id="KW-0805">Transcription regulation</keyword>
<organism>
    <name type="scientific">Chlamydia trachomatis serovar A (strain ATCC VR-571B / DSM 19440 / HAR-13)</name>
    <dbReference type="NCBI Taxonomy" id="315277"/>
    <lineage>
        <taxon>Bacteria</taxon>
        <taxon>Pseudomonadati</taxon>
        <taxon>Chlamydiota</taxon>
        <taxon>Chlamydiia</taxon>
        <taxon>Chlamydiales</taxon>
        <taxon>Chlamydiaceae</taxon>
        <taxon>Chlamydia/Chlamydophila group</taxon>
        <taxon>Chlamydia</taxon>
    </lineage>
</organism>
<gene>
    <name evidence="1" type="primary">nusB</name>
    <name type="ordered locus">CTA_0907</name>
</gene>
<reference key="1">
    <citation type="journal article" date="2005" name="Infect. Immun.">
        <title>Comparative genomic analysis of Chlamydia trachomatis oculotropic and genitotropic strains.</title>
        <authorList>
            <person name="Carlson J.H."/>
            <person name="Porcella S.F."/>
            <person name="McClarty G."/>
            <person name="Caldwell H.D."/>
        </authorList>
    </citation>
    <scope>NUCLEOTIDE SEQUENCE [LARGE SCALE GENOMIC DNA]</scope>
    <source>
        <strain>ATCC VR-571B / DSM 19440 / HAR-13</strain>
    </source>
</reference>
<protein>
    <recommendedName>
        <fullName evidence="1">Transcription antitermination protein NusB</fullName>
    </recommendedName>
    <alternativeName>
        <fullName evidence="1">Antitermination factor NusB</fullName>
    </alternativeName>
</protein>